<proteinExistence type="evidence at transcript level"/>
<name>1433D_TOBAC</name>
<evidence type="ECO:0000305" key="1"/>
<organism>
    <name type="scientific">Nicotiana tabacum</name>
    <name type="common">Common tobacco</name>
    <dbReference type="NCBI Taxonomy" id="4097"/>
    <lineage>
        <taxon>Eukaryota</taxon>
        <taxon>Viridiplantae</taxon>
        <taxon>Streptophyta</taxon>
        <taxon>Embryophyta</taxon>
        <taxon>Tracheophyta</taxon>
        <taxon>Spermatophyta</taxon>
        <taxon>Magnoliopsida</taxon>
        <taxon>eudicotyledons</taxon>
        <taxon>Gunneridae</taxon>
        <taxon>Pentapetalae</taxon>
        <taxon>asterids</taxon>
        <taxon>lamiids</taxon>
        <taxon>Solanales</taxon>
        <taxon>Solanaceae</taxon>
        <taxon>Nicotianoideae</taxon>
        <taxon>Nicotianeae</taxon>
        <taxon>Nicotiana</taxon>
    </lineage>
</organism>
<keyword id="KW-1185">Reference proteome</keyword>
<reference key="1">
    <citation type="journal article" date="1998" name="Planta">
        <title>Five new 14-3-3 isoforms from Nicotiana tabacum L.: implications for the phylogeny of plant 14-3-3 proteins.</title>
        <authorList>
            <person name="Piotrowski M."/>
            <person name="Oecking C."/>
        </authorList>
    </citation>
    <scope>NUCLEOTIDE SEQUENCE [MRNA]</scope>
</reference>
<sequence>MAVPENLTREQCLYLAKLAEQAERYEEMVKFMDRLVAVSASSELTVEERNLLSVAYKNVIGSLRAAWRIVSSIEQKEEGRKNEEHVVLVKDYRSKVESELSDVCAGILKILDQYLIPSAAAGESKVFYLKMKGDYYRYLAEFKVGNERKEAAEDTMLAYKAAQDIALAELAPTHPIRLGLALNYSVFYYEILNASEKACSMAKQAFEEAIAELDTLGEESYKDSTLIMQLLRDNLTLWTSDMQEQMDEA</sequence>
<accession>O49996</accession>
<feature type="chain" id="PRO_0000058710" description="14-3-3-like protein D">
    <location>
        <begin position="1"/>
        <end position="249"/>
    </location>
</feature>
<dbReference type="EMBL" id="U91725">
    <property type="protein sequence ID" value="AAC49893.1"/>
    <property type="molecule type" value="mRNA"/>
</dbReference>
<dbReference type="PIR" id="T04128">
    <property type="entry name" value="T04128"/>
</dbReference>
<dbReference type="RefSeq" id="NP_001312701.1">
    <property type="nucleotide sequence ID" value="NM_001325772.1"/>
</dbReference>
<dbReference type="SMR" id="O49996"/>
<dbReference type="STRING" id="4097.O49996"/>
<dbReference type="PaxDb" id="4097-O49996"/>
<dbReference type="GeneID" id="107805373"/>
<dbReference type="KEGG" id="nta:107805373"/>
<dbReference type="OMA" id="ECRVFYL"/>
<dbReference type="OrthoDB" id="10260625at2759"/>
<dbReference type="PhylomeDB" id="O49996"/>
<dbReference type="Proteomes" id="UP000084051">
    <property type="component" value="Unplaced"/>
</dbReference>
<dbReference type="GO" id="GO:0005737">
    <property type="term" value="C:cytoplasm"/>
    <property type="evidence" value="ECO:0000318"/>
    <property type="project" value="GO_Central"/>
</dbReference>
<dbReference type="GO" id="GO:0008104">
    <property type="term" value="P:protein localization"/>
    <property type="evidence" value="ECO:0000318"/>
    <property type="project" value="GO_Central"/>
</dbReference>
<dbReference type="GO" id="GO:0007165">
    <property type="term" value="P:signal transduction"/>
    <property type="evidence" value="ECO:0000318"/>
    <property type="project" value="GO_Central"/>
</dbReference>
<dbReference type="FunFam" id="1.20.190.20:FF:000002">
    <property type="entry name" value="14-3-3 protein epsilon"/>
    <property type="match status" value="1"/>
</dbReference>
<dbReference type="Gene3D" id="1.20.190.20">
    <property type="entry name" value="14-3-3 domain"/>
    <property type="match status" value="1"/>
</dbReference>
<dbReference type="InterPro" id="IPR000308">
    <property type="entry name" value="14-3-3"/>
</dbReference>
<dbReference type="InterPro" id="IPR023409">
    <property type="entry name" value="14-3-3_CS"/>
</dbReference>
<dbReference type="InterPro" id="IPR036815">
    <property type="entry name" value="14-3-3_dom_sf"/>
</dbReference>
<dbReference type="InterPro" id="IPR023410">
    <property type="entry name" value="14-3-3_domain"/>
</dbReference>
<dbReference type="PANTHER" id="PTHR18860">
    <property type="entry name" value="14-3-3 PROTEIN"/>
    <property type="match status" value="1"/>
</dbReference>
<dbReference type="Pfam" id="PF00244">
    <property type="entry name" value="14-3-3"/>
    <property type="match status" value="1"/>
</dbReference>
<dbReference type="PIRSF" id="PIRSF000868">
    <property type="entry name" value="14-3-3"/>
    <property type="match status" value="1"/>
</dbReference>
<dbReference type="PRINTS" id="PR00305">
    <property type="entry name" value="1433ZETA"/>
</dbReference>
<dbReference type="SMART" id="SM00101">
    <property type="entry name" value="14_3_3"/>
    <property type="match status" value="1"/>
</dbReference>
<dbReference type="SUPFAM" id="SSF48445">
    <property type="entry name" value="14-3-3 protein"/>
    <property type="match status" value="1"/>
</dbReference>
<dbReference type="PROSITE" id="PS00796">
    <property type="entry name" value="1433_1"/>
    <property type="match status" value="1"/>
</dbReference>
<dbReference type="PROSITE" id="PS00797">
    <property type="entry name" value="1433_2"/>
    <property type="match status" value="1"/>
</dbReference>
<protein>
    <recommendedName>
        <fullName>14-3-3-like protein D</fullName>
    </recommendedName>
</protein>
<comment type="similarity">
    <text evidence="1">Belongs to the 14-3-3 family.</text>
</comment>